<protein>
    <recommendedName>
        <fullName>ER membrane protein complex subunit 3</fullName>
    </recommendedName>
    <alternativeName>
        <fullName>Transmembrane protein 111</fullName>
    </alternativeName>
</protein>
<organism>
    <name type="scientific">Dictyostelium discoideum</name>
    <name type="common">Social amoeba</name>
    <dbReference type="NCBI Taxonomy" id="44689"/>
    <lineage>
        <taxon>Eukaryota</taxon>
        <taxon>Amoebozoa</taxon>
        <taxon>Evosea</taxon>
        <taxon>Eumycetozoa</taxon>
        <taxon>Dictyostelia</taxon>
        <taxon>Dictyosteliales</taxon>
        <taxon>Dictyosteliaceae</taxon>
        <taxon>Dictyostelium</taxon>
    </lineage>
</organism>
<name>EMC3_DICDI</name>
<accession>Q54YN3</accession>
<gene>
    <name type="primary">emc3</name>
    <name type="synonym">tmem111</name>
    <name type="ORF">DDB_G0278153</name>
</gene>
<reference key="1">
    <citation type="journal article" date="2005" name="Nature">
        <title>The genome of the social amoeba Dictyostelium discoideum.</title>
        <authorList>
            <person name="Eichinger L."/>
            <person name="Pachebat J.A."/>
            <person name="Gloeckner G."/>
            <person name="Rajandream M.A."/>
            <person name="Sucgang R."/>
            <person name="Berriman M."/>
            <person name="Song J."/>
            <person name="Olsen R."/>
            <person name="Szafranski K."/>
            <person name="Xu Q."/>
            <person name="Tunggal B."/>
            <person name="Kummerfeld S."/>
            <person name="Madera M."/>
            <person name="Konfortov B.A."/>
            <person name="Rivero F."/>
            <person name="Bankier A.T."/>
            <person name="Lehmann R."/>
            <person name="Hamlin N."/>
            <person name="Davies R."/>
            <person name="Gaudet P."/>
            <person name="Fey P."/>
            <person name="Pilcher K."/>
            <person name="Chen G."/>
            <person name="Saunders D."/>
            <person name="Sodergren E.J."/>
            <person name="Davis P."/>
            <person name="Kerhornou A."/>
            <person name="Nie X."/>
            <person name="Hall N."/>
            <person name="Anjard C."/>
            <person name="Hemphill L."/>
            <person name="Bason N."/>
            <person name="Farbrother P."/>
            <person name="Desany B."/>
            <person name="Just E."/>
            <person name="Morio T."/>
            <person name="Rost R."/>
            <person name="Churcher C.M."/>
            <person name="Cooper J."/>
            <person name="Haydock S."/>
            <person name="van Driessche N."/>
            <person name="Cronin A."/>
            <person name="Goodhead I."/>
            <person name="Muzny D.M."/>
            <person name="Mourier T."/>
            <person name="Pain A."/>
            <person name="Lu M."/>
            <person name="Harper D."/>
            <person name="Lindsay R."/>
            <person name="Hauser H."/>
            <person name="James K.D."/>
            <person name="Quiles M."/>
            <person name="Madan Babu M."/>
            <person name="Saito T."/>
            <person name="Buchrieser C."/>
            <person name="Wardroper A."/>
            <person name="Felder M."/>
            <person name="Thangavelu M."/>
            <person name="Johnson D."/>
            <person name="Knights A."/>
            <person name="Loulseged H."/>
            <person name="Mungall K.L."/>
            <person name="Oliver K."/>
            <person name="Price C."/>
            <person name="Quail M.A."/>
            <person name="Urushihara H."/>
            <person name="Hernandez J."/>
            <person name="Rabbinowitsch E."/>
            <person name="Steffen D."/>
            <person name="Sanders M."/>
            <person name="Ma J."/>
            <person name="Kohara Y."/>
            <person name="Sharp S."/>
            <person name="Simmonds M.N."/>
            <person name="Spiegler S."/>
            <person name="Tivey A."/>
            <person name="Sugano S."/>
            <person name="White B."/>
            <person name="Walker D."/>
            <person name="Woodward J.R."/>
            <person name="Winckler T."/>
            <person name="Tanaka Y."/>
            <person name="Shaulsky G."/>
            <person name="Schleicher M."/>
            <person name="Weinstock G.M."/>
            <person name="Rosenthal A."/>
            <person name="Cox E.C."/>
            <person name="Chisholm R.L."/>
            <person name="Gibbs R.A."/>
            <person name="Loomis W.F."/>
            <person name="Platzer M."/>
            <person name="Kay R.R."/>
            <person name="Williams J.G."/>
            <person name="Dear P.H."/>
            <person name="Noegel A.A."/>
            <person name="Barrell B.G."/>
            <person name="Kuspa A."/>
        </authorList>
    </citation>
    <scope>NUCLEOTIDE SEQUENCE [LARGE SCALE GENOMIC DNA]</scope>
    <source>
        <strain>AX4</strain>
    </source>
</reference>
<evidence type="ECO:0000250" key="1">
    <source>
        <dbReference type="UniProtKB" id="Q9P0I2"/>
    </source>
</evidence>
<evidence type="ECO:0000256" key="2">
    <source>
        <dbReference type="SAM" id="MobiDB-lite"/>
    </source>
</evidence>
<evidence type="ECO:0000305" key="3"/>
<proteinExistence type="inferred from homology"/>
<dbReference type="EMBL" id="AAFI02000023">
    <property type="protein sequence ID" value="EAL68249.1"/>
    <property type="molecule type" value="Genomic_DNA"/>
</dbReference>
<dbReference type="RefSeq" id="XP_642169.1">
    <property type="nucleotide sequence ID" value="XM_637077.1"/>
</dbReference>
<dbReference type="SMR" id="Q54YN3"/>
<dbReference type="FunCoup" id="Q54YN3">
    <property type="interactions" value="535"/>
</dbReference>
<dbReference type="STRING" id="44689.Q54YN3"/>
<dbReference type="PaxDb" id="44689-DDB0266861"/>
<dbReference type="EnsemblProtists" id="EAL68249">
    <property type="protein sequence ID" value="EAL68249"/>
    <property type="gene ID" value="DDB_G0278153"/>
</dbReference>
<dbReference type="GeneID" id="8621376"/>
<dbReference type="KEGG" id="ddi:DDB_G0278153"/>
<dbReference type="dictyBase" id="DDB_G0278153">
    <property type="gene designation" value="tmem111"/>
</dbReference>
<dbReference type="VEuPathDB" id="AmoebaDB:DDB_G0278153"/>
<dbReference type="eggNOG" id="KOG3188">
    <property type="taxonomic scope" value="Eukaryota"/>
</dbReference>
<dbReference type="HOGENOM" id="CLU_060791_1_0_1"/>
<dbReference type="InParanoid" id="Q54YN3"/>
<dbReference type="OMA" id="KDMDPRW"/>
<dbReference type="PhylomeDB" id="Q54YN3"/>
<dbReference type="PRO" id="PR:Q54YN3"/>
<dbReference type="Proteomes" id="UP000002195">
    <property type="component" value="Chromosome 3"/>
</dbReference>
<dbReference type="GO" id="GO:0072546">
    <property type="term" value="C:EMC complex"/>
    <property type="evidence" value="ECO:0000318"/>
    <property type="project" value="GO_Central"/>
</dbReference>
<dbReference type="GO" id="GO:0005789">
    <property type="term" value="C:endoplasmic reticulum membrane"/>
    <property type="evidence" value="ECO:0000250"/>
    <property type="project" value="UniProtKB"/>
</dbReference>
<dbReference type="GO" id="GO:0045050">
    <property type="term" value="P:protein insertion into ER membrane by stop-transfer membrane-anchor sequence"/>
    <property type="evidence" value="ECO:0000250"/>
    <property type="project" value="UniProtKB"/>
</dbReference>
<dbReference type="GO" id="GO:0071816">
    <property type="term" value="P:tail-anchored membrane protein insertion into ER membrane"/>
    <property type="evidence" value="ECO:0000250"/>
    <property type="project" value="UniProtKB"/>
</dbReference>
<dbReference type="InterPro" id="IPR008568">
    <property type="entry name" value="EMC3"/>
</dbReference>
<dbReference type="InterPro" id="IPR002809">
    <property type="entry name" value="EMC3/TMCO1"/>
</dbReference>
<dbReference type="PANTHER" id="PTHR13116">
    <property type="entry name" value="ER MEMBRANE PROTEIN COMPLEX SUBUNIT 3"/>
    <property type="match status" value="1"/>
</dbReference>
<dbReference type="PANTHER" id="PTHR13116:SF5">
    <property type="entry name" value="ER MEMBRANE PROTEIN COMPLEX SUBUNIT 3"/>
    <property type="match status" value="1"/>
</dbReference>
<dbReference type="Pfam" id="PF01956">
    <property type="entry name" value="EMC3_TMCO1"/>
    <property type="match status" value="1"/>
</dbReference>
<dbReference type="SMART" id="SM01415">
    <property type="entry name" value="DUF106"/>
    <property type="match status" value="1"/>
</dbReference>
<keyword id="KW-0256">Endoplasmic reticulum</keyword>
<keyword id="KW-0472">Membrane</keyword>
<keyword id="KW-1185">Reference proteome</keyword>
<keyword id="KW-0812">Transmembrane</keyword>
<keyword id="KW-1133">Transmembrane helix</keyword>
<sequence>MTESPIVLDVEIRNWVVIPILIVLFIVSALKLNISRIMQINSGKPQDVEKTMQMQTINRVRRLVSFYNRIPQKSFFIRKAYLCGTTGSKTNKGILSSIAPTQEDSNPMNMMFANSMFTDPSGITDMLKGNIMHLIPQVTMMSWVNHFFSGFVACKLPFFPLTIRFKTFLQRGIEMGSLDVSYVSSLSWYFLCWFGSEGINAILLGENMVSADSQLLQSSIEPGPPTQQTPIHKIYASEKENIEMIRYDSLMTNIEDRFLDNIKKKTSFDFNQINKNNNNNNNNTSNIKPKPIKSNLSNSKQSKRITYQKPSSLI</sequence>
<feature type="chain" id="PRO_0000350554" description="ER membrane protein complex subunit 3">
    <location>
        <begin position="1"/>
        <end position="314"/>
    </location>
</feature>
<feature type="topological domain" description="Lumenal" evidence="1">
    <location>
        <begin position="1"/>
        <end position="14"/>
    </location>
</feature>
<feature type="transmembrane region" description="Helical" evidence="1">
    <location>
        <begin position="15"/>
        <end position="38"/>
    </location>
</feature>
<feature type="topological domain" description="Cytoplasmic" evidence="1">
    <location>
        <begin position="39"/>
        <end position="130"/>
    </location>
</feature>
<feature type="transmembrane region" description="Helical" evidence="1">
    <location>
        <begin position="131"/>
        <end position="146"/>
    </location>
</feature>
<feature type="topological domain" description="Lumenal" evidence="1">
    <location>
        <begin position="147"/>
        <end position="185"/>
    </location>
</feature>
<feature type="transmembrane region" description="Helical" evidence="1">
    <location>
        <begin position="186"/>
        <end position="204"/>
    </location>
</feature>
<feature type="topological domain" description="Cytoplasmic" evidence="1">
    <location>
        <begin position="205"/>
        <end position="314"/>
    </location>
</feature>
<feature type="region of interest" description="Disordered" evidence="2">
    <location>
        <begin position="272"/>
        <end position="314"/>
    </location>
</feature>
<feature type="compositionally biased region" description="Low complexity" evidence="2">
    <location>
        <begin position="272"/>
        <end position="293"/>
    </location>
</feature>
<feature type="compositionally biased region" description="Polar residues" evidence="2">
    <location>
        <begin position="294"/>
        <end position="314"/>
    </location>
</feature>
<comment type="function">
    <text evidence="1">Part of the endoplasmic reticulum membrane protein complex (EMC) that enables the energy-independent insertion into endoplasmic reticulum membranes of newly synthesized membrane proteins. Preferentially accommodates proteins with transmembrane domains that are weakly hydrophobic or contain destabilizing features such as charged and aromatic residues. Involved in the cotranslational insertion of multi-pass membrane proteins in which stop-transfer membrane-anchor sequences become ER membrane spanning helices. It is also required for the post-translational insertion of tail-anchored/TA proteins in endoplasmic reticulum membranes. By mediating the proper cotranslational insertion of N-terminal transmembrane domains in an N-exo topology, with translocated N-terminus in the lumen of the ER, controls the topology of multi-pass membrane proteins. By regulating the insertion of various proteins in membranes, it is indirectly involved in many cellular processes.</text>
</comment>
<comment type="subunit">
    <text evidence="1">Component of the ER membrane protein complex (EMC).</text>
</comment>
<comment type="subcellular location">
    <subcellularLocation>
        <location evidence="1">Endoplasmic reticulum membrane</location>
        <topology evidence="1">Multi-pass membrane protein</topology>
    </subcellularLocation>
</comment>
<comment type="similarity">
    <text evidence="3">Belongs to the EMC3 family.</text>
</comment>